<keyword id="KW-1185">Reference proteome</keyword>
<keyword id="KW-0687">Ribonucleoprotein</keyword>
<keyword id="KW-0689">Ribosomal protein</keyword>
<dbReference type="EMBL" id="CP000492">
    <property type="protein sequence ID" value="ABL66727.1"/>
    <property type="molecule type" value="Genomic_DNA"/>
</dbReference>
<dbReference type="RefSeq" id="WP_015961254.1">
    <property type="nucleotide sequence ID" value="NC_008639.1"/>
</dbReference>
<dbReference type="SMR" id="A1BK00"/>
<dbReference type="STRING" id="290317.Cpha266_2743"/>
<dbReference type="KEGG" id="cph:Cpha266_2743"/>
<dbReference type="eggNOG" id="COG0230">
    <property type="taxonomic scope" value="Bacteria"/>
</dbReference>
<dbReference type="HOGENOM" id="CLU_129938_2_0_10"/>
<dbReference type="OrthoDB" id="9804164at2"/>
<dbReference type="Proteomes" id="UP000008701">
    <property type="component" value="Chromosome"/>
</dbReference>
<dbReference type="GO" id="GO:1990904">
    <property type="term" value="C:ribonucleoprotein complex"/>
    <property type="evidence" value="ECO:0007669"/>
    <property type="project" value="UniProtKB-KW"/>
</dbReference>
<dbReference type="GO" id="GO:0005840">
    <property type="term" value="C:ribosome"/>
    <property type="evidence" value="ECO:0007669"/>
    <property type="project" value="UniProtKB-KW"/>
</dbReference>
<dbReference type="GO" id="GO:0003735">
    <property type="term" value="F:structural constituent of ribosome"/>
    <property type="evidence" value="ECO:0007669"/>
    <property type="project" value="InterPro"/>
</dbReference>
<dbReference type="GO" id="GO:0006412">
    <property type="term" value="P:translation"/>
    <property type="evidence" value="ECO:0007669"/>
    <property type="project" value="UniProtKB-UniRule"/>
</dbReference>
<dbReference type="FunFam" id="1.10.287.3980:FF:000001">
    <property type="entry name" value="Mitochondrial ribosomal protein L34"/>
    <property type="match status" value="1"/>
</dbReference>
<dbReference type="Gene3D" id="1.10.287.3980">
    <property type="match status" value="1"/>
</dbReference>
<dbReference type="HAMAP" id="MF_00391">
    <property type="entry name" value="Ribosomal_bL34"/>
    <property type="match status" value="1"/>
</dbReference>
<dbReference type="InterPro" id="IPR000271">
    <property type="entry name" value="Ribosomal_bL34"/>
</dbReference>
<dbReference type="InterPro" id="IPR020939">
    <property type="entry name" value="Ribosomal_bL34_CS"/>
</dbReference>
<dbReference type="NCBIfam" id="TIGR01030">
    <property type="entry name" value="rpmH_bact"/>
    <property type="match status" value="1"/>
</dbReference>
<dbReference type="PANTHER" id="PTHR14503:SF4">
    <property type="entry name" value="LARGE RIBOSOMAL SUBUNIT PROTEIN BL34M"/>
    <property type="match status" value="1"/>
</dbReference>
<dbReference type="PANTHER" id="PTHR14503">
    <property type="entry name" value="MITOCHONDRIAL RIBOSOMAL PROTEIN 34 FAMILY MEMBER"/>
    <property type="match status" value="1"/>
</dbReference>
<dbReference type="Pfam" id="PF00468">
    <property type="entry name" value="Ribosomal_L34"/>
    <property type="match status" value="1"/>
</dbReference>
<dbReference type="PROSITE" id="PS00784">
    <property type="entry name" value="RIBOSOMAL_L34"/>
    <property type="match status" value="1"/>
</dbReference>
<protein>
    <recommendedName>
        <fullName evidence="1">Large ribosomal subunit protein bL34</fullName>
    </recommendedName>
    <alternativeName>
        <fullName evidence="3">50S ribosomal protein L34</fullName>
    </alternativeName>
</protein>
<reference key="1">
    <citation type="submission" date="2006-12" db="EMBL/GenBank/DDBJ databases">
        <title>Complete sequence of Chlorobium phaeobacteroides DSM 266.</title>
        <authorList>
            <consortium name="US DOE Joint Genome Institute"/>
            <person name="Copeland A."/>
            <person name="Lucas S."/>
            <person name="Lapidus A."/>
            <person name="Barry K."/>
            <person name="Detter J.C."/>
            <person name="Glavina del Rio T."/>
            <person name="Hammon N."/>
            <person name="Israni S."/>
            <person name="Pitluck S."/>
            <person name="Goltsman E."/>
            <person name="Schmutz J."/>
            <person name="Larimer F."/>
            <person name="Land M."/>
            <person name="Hauser L."/>
            <person name="Mikhailova N."/>
            <person name="Li T."/>
            <person name="Overmann J."/>
            <person name="Bryant D.A."/>
            <person name="Richardson P."/>
        </authorList>
    </citation>
    <scope>NUCLEOTIDE SEQUENCE [LARGE SCALE GENOMIC DNA]</scope>
    <source>
        <strain>DSM 266 / SMG 266 / 2430</strain>
    </source>
</reference>
<comment type="similarity">
    <text evidence="1">Belongs to the bacterial ribosomal protein bL34 family.</text>
</comment>
<name>RL34_CHLPD</name>
<sequence>MKRTYQPRNRKRRNKHGFRQRMSTKNGRRVLASRRAKGRHSLSVSSAMGTAGQ</sequence>
<gene>
    <name evidence="1" type="primary">rpmH</name>
    <name type="ordered locus">Cpha266_2743</name>
</gene>
<evidence type="ECO:0000255" key="1">
    <source>
        <dbReference type="HAMAP-Rule" id="MF_00391"/>
    </source>
</evidence>
<evidence type="ECO:0000256" key="2">
    <source>
        <dbReference type="SAM" id="MobiDB-lite"/>
    </source>
</evidence>
<evidence type="ECO:0000305" key="3"/>
<feature type="chain" id="PRO_1000013314" description="Large ribosomal subunit protein bL34">
    <location>
        <begin position="1"/>
        <end position="53"/>
    </location>
</feature>
<feature type="region of interest" description="Disordered" evidence="2">
    <location>
        <begin position="1"/>
        <end position="53"/>
    </location>
</feature>
<feature type="compositionally biased region" description="Basic residues" evidence="2">
    <location>
        <begin position="1"/>
        <end position="19"/>
    </location>
</feature>
<feature type="compositionally biased region" description="Basic residues" evidence="2">
    <location>
        <begin position="26"/>
        <end position="40"/>
    </location>
</feature>
<feature type="compositionally biased region" description="Polar residues" evidence="2">
    <location>
        <begin position="42"/>
        <end position="53"/>
    </location>
</feature>
<proteinExistence type="inferred from homology"/>
<organism>
    <name type="scientific">Chlorobium phaeobacteroides (strain DSM 266 / SMG 266 / 2430)</name>
    <dbReference type="NCBI Taxonomy" id="290317"/>
    <lineage>
        <taxon>Bacteria</taxon>
        <taxon>Pseudomonadati</taxon>
        <taxon>Chlorobiota</taxon>
        <taxon>Chlorobiia</taxon>
        <taxon>Chlorobiales</taxon>
        <taxon>Chlorobiaceae</taxon>
        <taxon>Chlorobium/Pelodictyon group</taxon>
        <taxon>Chlorobium</taxon>
    </lineage>
</organism>
<accession>A1BK00</accession>